<dbReference type="EMBL" id="AB473845">
    <property type="protein sequence ID" value="BAH10556.1"/>
    <property type="molecule type" value="mRNA"/>
</dbReference>
<dbReference type="EMBL" id="AC009991">
    <property type="protein sequence ID" value="AAF01513.1"/>
    <property type="molecule type" value="Genomic_DNA"/>
</dbReference>
<dbReference type="EMBL" id="AC073395">
    <property type="protein sequence ID" value="AAG50983.1"/>
    <property type="molecule type" value="Genomic_DNA"/>
</dbReference>
<dbReference type="EMBL" id="CP002686">
    <property type="protein sequence ID" value="AEE75001.1"/>
    <property type="molecule type" value="Genomic_DNA"/>
</dbReference>
<dbReference type="RefSeq" id="NP_187720.1">
    <property type="nucleotide sequence ID" value="NM_111946.5"/>
</dbReference>
<dbReference type="SMR" id="Q9SRL8"/>
<dbReference type="BioGRID" id="5614">
    <property type="interactions" value="11"/>
</dbReference>
<dbReference type="FunCoup" id="Q9SRL8">
    <property type="interactions" value="676"/>
</dbReference>
<dbReference type="IntAct" id="Q9SRL8">
    <property type="interactions" value="10"/>
</dbReference>
<dbReference type="STRING" id="3702.Q9SRL8"/>
<dbReference type="PaxDb" id="3702-AT3G11090.1"/>
<dbReference type="EnsemblPlants" id="AT3G11090.1">
    <property type="protein sequence ID" value="AT3G11090.1"/>
    <property type="gene ID" value="AT3G11090"/>
</dbReference>
<dbReference type="GeneID" id="820280"/>
<dbReference type="Gramene" id="AT3G11090.1">
    <property type="protein sequence ID" value="AT3G11090.1"/>
    <property type="gene ID" value="AT3G11090"/>
</dbReference>
<dbReference type="KEGG" id="ath:AT3G11090"/>
<dbReference type="Araport" id="AT3G11090"/>
<dbReference type="TAIR" id="AT3G11090">
    <property type="gene designation" value="LBD21"/>
</dbReference>
<dbReference type="eggNOG" id="ENOG502RYX5">
    <property type="taxonomic scope" value="Eukaryota"/>
</dbReference>
<dbReference type="HOGENOM" id="CLU_058353_5_3_1"/>
<dbReference type="InParanoid" id="Q9SRL8"/>
<dbReference type="OMA" id="VAEQHDH"/>
<dbReference type="OrthoDB" id="1925971at2759"/>
<dbReference type="PhylomeDB" id="Q9SRL8"/>
<dbReference type="PRO" id="PR:Q9SRL8"/>
<dbReference type="Proteomes" id="UP000006548">
    <property type="component" value="Chromosome 3"/>
</dbReference>
<dbReference type="ExpressionAtlas" id="Q9SRL8">
    <property type="expression patterns" value="baseline and differential"/>
</dbReference>
<dbReference type="InterPro" id="IPR004883">
    <property type="entry name" value="LOB"/>
</dbReference>
<dbReference type="PANTHER" id="PTHR31301:SF24">
    <property type="entry name" value="LOB DOMAIN-CONTAINING PROTEIN 21"/>
    <property type="match status" value="1"/>
</dbReference>
<dbReference type="PANTHER" id="PTHR31301">
    <property type="entry name" value="LOB DOMAIN-CONTAINING PROTEIN 4-RELATED"/>
    <property type="match status" value="1"/>
</dbReference>
<dbReference type="Pfam" id="PF03195">
    <property type="entry name" value="LOB"/>
    <property type="match status" value="1"/>
</dbReference>
<dbReference type="PROSITE" id="PS50891">
    <property type="entry name" value="LOB"/>
    <property type="match status" value="1"/>
</dbReference>
<organism>
    <name type="scientific">Arabidopsis thaliana</name>
    <name type="common">Mouse-ear cress</name>
    <dbReference type="NCBI Taxonomy" id="3702"/>
    <lineage>
        <taxon>Eukaryota</taxon>
        <taxon>Viridiplantae</taxon>
        <taxon>Streptophyta</taxon>
        <taxon>Embryophyta</taxon>
        <taxon>Tracheophyta</taxon>
        <taxon>Spermatophyta</taxon>
        <taxon>Magnoliopsida</taxon>
        <taxon>eudicotyledons</taxon>
        <taxon>Gunneridae</taxon>
        <taxon>Pentapetalae</taxon>
        <taxon>rosids</taxon>
        <taxon>malvids</taxon>
        <taxon>Brassicales</taxon>
        <taxon>Brassicaceae</taxon>
        <taxon>Camelineae</taxon>
        <taxon>Arabidopsis</taxon>
    </lineage>
</organism>
<gene>
    <name type="primary">LBD21</name>
    <name type="synonym">ASL12</name>
    <name type="ordered locus">At3g11090</name>
    <name type="ORF">F11B9.5</name>
    <name type="ORF">F9F8.10</name>
</gene>
<comment type="similarity">
    <text evidence="2">Belongs to the LOB domain-containing protein family.</text>
</comment>
<name>LBD21_ARATH</name>
<keyword id="KW-1185">Reference proteome</keyword>
<evidence type="ECO:0000255" key="1">
    <source>
        <dbReference type="PROSITE-ProRule" id="PRU00291"/>
    </source>
</evidence>
<evidence type="ECO:0000305" key="2"/>
<feature type="chain" id="PRO_0000132272" description="LOB domain-containing protein 21">
    <location>
        <begin position="1"/>
        <end position="165"/>
    </location>
</feature>
<feature type="domain" description="LOB" evidence="1">
    <location>
        <begin position="10"/>
        <end position="111"/>
    </location>
</feature>
<proteinExistence type="evidence at transcript level"/>
<protein>
    <recommendedName>
        <fullName>LOB domain-containing protein 21</fullName>
    </recommendedName>
    <alternativeName>
        <fullName>ASYMMETRIC LEAVES 2-like protein 12</fullName>
        <shortName>AS2-like protein 12</shortName>
    </alternativeName>
</protein>
<reference key="1">
    <citation type="journal article" date="2009" name="Plant J.">
        <title>Characterization of genes in the ASYMMETRIC LEAVES2/LATERAL ORGAN BOUNDARIES (AS2/LOB) family in Arabidopsis thaliana, and functional and molecular comparisons between AS2 and other family members.</title>
        <authorList>
            <person name="Matsumura Y."/>
            <person name="Iwakawa H."/>
            <person name="Machida Y."/>
            <person name="Machida C."/>
        </authorList>
    </citation>
    <scope>NUCLEOTIDE SEQUENCE [MRNA]</scope>
    <source>
        <strain>cv. Columbia</strain>
    </source>
</reference>
<reference key="2">
    <citation type="journal article" date="2000" name="Nature">
        <title>Sequence and analysis of chromosome 3 of the plant Arabidopsis thaliana.</title>
        <authorList>
            <person name="Salanoubat M."/>
            <person name="Lemcke K."/>
            <person name="Rieger M."/>
            <person name="Ansorge W."/>
            <person name="Unseld M."/>
            <person name="Fartmann B."/>
            <person name="Valle G."/>
            <person name="Bloecker H."/>
            <person name="Perez-Alonso M."/>
            <person name="Obermaier B."/>
            <person name="Delseny M."/>
            <person name="Boutry M."/>
            <person name="Grivell L.A."/>
            <person name="Mache R."/>
            <person name="Puigdomenech P."/>
            <person name="De Simone V."/>
            <person name="Choisne N."/>
            <person name="Artiguenave F."/>
            <person name="Robert C."/>
            <person name="Brottier P."/>
            <person name="Wincker P."/>
            <person name="Cattolico L."/>
            <person name="Weissenbach J."/>
            <person name="Saurin W."/>
            <person name="Quetier F."/>
            <person name="Schaefer M."/>
            <person name="Mueller-Auer S."/>
            <person name="Gabel C."/>
            <person name="Fuchs M."/>
            <person name="Benes V."/>
            <person name="Wurmbach E."/>
            <person name="Drzonek H."/>
            <person name="Erfle H."/>
            <person name="Jordan N."/>
            <person name="Bangert S."/>
            <person name="Wiedelmann R."/>
            <person name="Kranz H."/>
            <person name="Voss H."/>
            <person name="Holland R."/>
            <person name="Brandt P."/>
            <person name="Nyakatura G."/>
            <person name="Vezzi A."/>
            <person name="D'Angelo M."/>
            <person name="Pallavicini A."/>
            <person name="Toppo S."/>
            <person name="Simionati B."/>
            <person name="Conrad A."/>
            <person name="Hornischer K."/>
            <person name="Kauer G."/>
            <person name="Loehnert T.-H."/>
            <person name="Nordsiek G."/>
            <person name="Reichelt J."/>
            <person name="Scharfe M."/>
            <person name="Schoen O."/>
            <person name="Bargues M."/>
            <person name="Terol J."/>
            <person name="Climent J."/>
            <person name="Navarro P."/>
            <person name="Collado C."/>
            <person name="Perez-Perez A."/>
            <person name="Ottenwaelder B."/>
            <person name="Duchemin D."/>
            <person name="Cooke R."/>
            <person name="Laudie M."/>
            <person name="Berger-Llauro C."/>
            <person name="Purnelle B."/>
            <person name="Masuy D."/>
            <person name="de Haan M."/>
            <person name="Maarse A.C."/>
            <person name="Alcaraz J.-P."/>
            <person name="Cottet A."/>
            <person name="Casacuberta E."/>
            <person name="Monfort A."/>
            <person name="Argiriou A."/>
            <person name="Flores M."/>
            <person name="Liguori R."/>
            <person name="Vitale D."/>
            <person name="Mannhaupt G."/>
            <person name="Haase D."/>
            <person name="Schoof H."/>
            <person name="Rudd S."/>
            <person name="Zaccaria P."/>
            <person name="Mewes H.-W."/>
            <person name="Mayer K.F.X."/>
            <person name="Kaul S."/>
            <person name="Town C.D."/>
            <person name="Koo H.L."/>
            <person name="Tallon L.J."/>
            <person name="Jenkins J."/>
            <person name="Rooney T."/>
            <person name="Rizzo M."/>
            <person name="Walts A."/>
            <person name="Utterback T."/>
            <person name="Fujii C.Y."/>
            <person name="Shea T.P."/>
            <person name="Creasy T.H."/>
            <person name="Haas B."/>
            <person name="Maiti R."/>
            <person name="Wu D."/>
            <person name="Peterson J."/>
            <person name="Van Aken S."/>
            <person name="Pai G."/>
            <person name="Militscher J."/>
            <person name="Sellers P."/>
            <person name="Gill J.E."/>
            <person name="Feldblyum T.V."/>
            <person name="Preuss D."/>
            <person name="Lin X."/>
            <person name="Nierman W.C."/>
            <person name="Salzberg S.L."/>
            <person name="White O."/>
            <person name="Venter J.C."/>
            <person name="Fraser C.M."/>
            <person name="Kaneko T."/>
            <person name="Nakamura Y."/>
            <person name="Sato S."/>
            <person name="Kato T."/>
            <person name="Asamizu E."/>
            <person name="Sasamoto S."/>
            <person name="Kimura T."/>
            <person name="Idesawa K."/>
            <person name="Kawashima K."/>
            <person name="Kishida Y."/>
            <person name="Kiyokawa C."/>
            <person name="Kohara M."/>
            <person name="Matsumoto M."/>
            <person name="Matsuno A."/>
            <person name="Muraki A."/>
            <person name="Nakayama S."/>
            <person name="Nakazaki N."/>
            <person name="Shinpo S."/>
            <person name="Takeuchi C."/>
            <person name="Wada T."/>
            <person name="Watanabe A."/>
            <person name="Yamada M."/>
            <person name="Yasuda M."/>
            <person name="Tabata S."/>
        </authorList>
    </citation>
    <scope>NUCLEOTIDE SEQUENCE [LARGE SCALE GENOMIC DNA]</scope>
    <source>
        <strain>cv. Columbia</strain>
    </source>
</reference>
<reference key="3">
    <citation type="journal article" date="2017" name="Plant J.">
        <title>Araport11: a complete reannotation of the Arabidopsis thaliana reference genome.</title>
        <authorList>
            <person name="Cheng C.Y."/>
            <person name="Krishnakumar V."/>
            <person name="Chan A.P."/>
            <person name="Thibaud-Nissen F."/>
            <person name="Schobel S."/>
            <person name="Town C.D."/>
        </authorList>
    </citation>
    <scope>GENOME REANNOTATION</scope>
    <source>
        <strain>cv. Columbia</strain>
    </source>
</reference>
<reference key="4">
    <citation type="journal article" date="2002" name="Plant Physiol.">
        <title>The LATERAL ORGAN BOUNDARIES gene defines a novel, plant-specific gene family.</title>
        <authorList>
            <person name="Shuai B."/>
            <person name="Reynaga-Pena C.G."/>
            <person name="Springer P.S."/>
        </authorList>
    </citation>
    <scope>GENE FAMILY</scope>
    <scope>NOMENCLATURE</scope>
</reference>
<reference key="5">
    <citation type="journal article" date="2002" name="Plant Cell Physiol.">
        <title>The ASYMMETRIC LEAVES2 gene of Arabidopsis thaliana, required for formation of a symmetric flat leaf lamina, encodes a member of a novel family of proteins characterized by cysteine repeats and a leucine zipper.</title>
        <authorList>
            <person name="Iwakawa H."/>
            <person name="Ueno Y."/>
            <person name="Semiarti E."/>
            <person name="Onouchi H."/>
            <person name="Kojima S."/>
            <person name="Tsukaya H."/>
            <person name="Hasebe M."/>
            <person name="Soma T."/>
            <person name="Ikezaki M."/>
            <person name="Machida C."/>
            <person name="Machida Y."/>
        </authorList>
    </citation>
    <scope>GENE FAMILY</scope>
    <scope>NOMENCLATURE</scope>
</reference>
<accession>Q9SRL8</accession>
<accession>B7XG66</accession>
<sequence>MRGHEPRSSSSCAACKLLKRRCTPTCIFAPYFRSSDLITFAKVHKVFGASNVSKLLGEVPEEQRQETVNSLAYEAEVRLKDPVYGCIGAIASLQKKMLELQHDLAVARTRLLAHSGVNNSQVSPLDDSPELAAFLDLVPYSDLMLLDGSTNLDAYLYDLGQPPFV</sequence>